<dbReference type="EC" id="7.1.1.-" evidence="1"/>
<dbReference type="EMBL" id="DQ119058">
    <property type="protein sequence ID" value="AAZ94704.1"/>
    <property type="molecule type" value="Genomic_DNA"/>
</dbReference>
<dbReference type="EMBL" id="DQ865975">
    <property type="protein sequence ID" value="ABI97469.1"/>
    <property type="molecule type" value="Genomic_DNA"/>
</dbReference>
<dbReference type="EMBL" id="DQ865976">
    <property type="protein sequence ID" value="ABI98800.1"/>
    <property type="molecule type" value="Genomic_DNA"/>
</dbReference>
<dbReference type="EMBL" id="AJ970307">
    <property type="protein sequence ID" value="CAJ00815.1"/>
    <property type="molecule type" value="Genomic_DNA"/>
</dbReference>
<dbReference type="RefSeq" id="YP_247656.1">
    <property type="nucleotide sequence ID" value="NC_007144.1"/>
</dbReference>
<dbReference type="SMR" id="Q4VZL2"/>
<dbReference type="GeneID" id="3429260"/>
<dbReference type="KEGG" id="csv:3429260"/>
<dbReference type="OrthoDB" id="1845069at2759"/>
<dbReference type="GO" id="GO:0009535">
    <property type="term" value="C:chloroplast thylakoid membrane"/>
    <property type="evidence" value="ECO:0007669"/>
    <property type="project" value="UniProtKB-SubCell"/>
</dbReference>
<dbReference type="GO" id="GO:0051287">
    <property type="term" value="F:NAD binding"/>
    <property type="evidence" value="ECO:0007669"/>
    <property type="project" value="InterPro"/>
</dbReference>
<dbReference type="GO" id="GO:0016655">
    <property type="term" value="F:oxidoreductase activity, acting on NAD(P)H, quinone or similar compound as acceptor"/>
    <property type="evidence" value="ECO:0007669"/>
    <property type="project" value="UniProtKB-UniRule"/>
</dbReference>
<dbReference type="GO" id="GO:0048038">
    <property type="term" value="F:quinone binding"/>
    <property type="evidence" value="ECO:0007669"/>
    <property type="project" value="UniProtKB-KW"/>
</dbReference>
<dbReference type="GO" id="GO:0019684">
    <property type="term" value="P:photosynthesis, light reaction"/>
    <property type="evidence" value="ECO:0007669"/>
    <property type="project" value="UniProtKB-UniRule"/>
</dbReference>
<dbReference type="FunFam" id="1.10.645.10:FF:000003">
    <property type="entry name" value="NAD(P)H-quinone oxidoreductase subunit H, chloroplastic"/>
    <property type="match status" value="1"/>
</dbReference>
<dbReference type="Gene3D" id="1.10.645.10">
    <property type="entry name" value="Cytochrome-c3 Hydrogenase, chain B"/>
    <property type="match status" value="1"/>
</dbReference>
<dbReference type="HAMAP" id="MF_01358">
    <property type="entry name" value="NDH1_NuoD"/>
    <property type="match status" value="1"/>
</dbReference>
<dbReference type="InterPro" id="IPR001135">
    <property type="entry name" value="NADH_Q_OxRdtase_suD"/>
</dbReference>
<dbReference type="InterPro" id="IPR014029">
    <property type="entry name" value="NADH_UbQ_OxRdtase_49kDa_CS"/>
</dbReference>
<dbReference type="InterPro" id="IPR022885">
    <property type="entry name" value="NDH1_su_D/H"/>
</dbReference>
<dbReference type="InterPro" id="IPR029014">
    <property type="entry name" value="NiFe-Hase_large"/>
</dbReference>
<dbReference type="NCBIfam" id="NF004739">
    <property type="entry name" value="PRK06075.1"/>
    <property type="match status" value="1"/>
</dbReference>
<dbReference type="NCBIfam" id="NF005649">
    <property type="entry name" value="PRK07415.1"/>
    <property type="match status" value="1"/>
</dbReference>
<dbReference type="PANTHER" id="PTHR11993:SF10">
    <property type="entry name" value="NADH DEHYDROGENASE [UBIQUINONE] IRON-SULFUR PROTEIN 2, MITOCHONDRIAL"/>
    <property type="match status" value="1"/>
</dbReference>
<dbReference type="PANTHER" id="PTHR11993">
    <property type="entry name" value="NADH-UBIQUINONE OXIDOREDUCTASE 49 KDA SUBUNIT"/>
    <property type="match status" value="1"/>
</dbReference>
<dbReference type="Pfam" id="PF00346">
    <property type="entry name" value="Complex1_49kDa"/>
    <property type="match status" value="1"/>
</dbReference>
<dbReference type="SUPFAM" id="SSF56762">
    <property type="entry name" value="HydB/Nqo4-like"/>
    <property type="match status" value="1"/>
</dbReference>
<dbReference type="PROSITE" id="PS00535">
    <property type="entry name" value="COMPLEX1_49K"/>
    <property type="match status" value="1"/>
</dbReference>
<feature type="chain" id="PRO_0000357982" description="NAD(P)H-quinone oxidoreductase subunit H, chloroplastic">
    <location>
        <begin position="1"/>
        <end position="393"/>
    </location>
</feature>
<sequence length="393" mass="45244">MNGPATRKDLMIVNMGPHHPSMHGVLRLILTLDGEDVIDCEPILGYLHRGMEKIAENRTIIQYLPYVTRWDYLATMFTEAITVNGPEQLGNIQVPKRASYIRVIMLELSRIASHLLWLGPFMADIGAQTPFFYIFRERELVYDLFEAATGMRMMHNFFRIGGVAADLPHGWIDKCLDFCDYFLTAVAEYQKLITQNPIFLERVEGVGIISGEEVINWGLSGPMLRASGIPWDLRKVDRYECYDEFDWEVQWQKEGDSLARYLVRLAEMTESVKIIQQALEGIPGGPYENLEIRSFDRARSPEWNDFDYRFISKKPSPTFELAKQELYVRVEAPKGELGIFLIGDQGGFPWRWKIRPPGFINLQILPQLVKRMKLADIMTILGSIDIIMGEVDR</sequence>
<evidence type="ECO:0000255" key="1">
    <source>
        <dbReference type="HAMAP-Rule" id="MF_01358"/>
    </source>
</evidence>
<gene>
    <name evidence="1" type="primary">ndhH</name>
    <name type="ordered locus">CsCp111</name>
</gene>
<accession>Q4VZL2</accession>
<keyword id="KW-0150">Chloroplast</keyword>
<keyword id="KW-0472">Membrane</keyword>
<keyword id="KW-0520">NAD</keyword>
<keyword id="KW-0521">NADP</keyword>
<keyword id="KW-0934">Plastid</keyword>
<keyword id="KW-0618">Plastoquinone</keyword>
<keyword id="KW-0874">Quinone</keyword>
<keyword id="KW-0793">Thylakoid</keyword>
<keyword id="KW-1278">Translocase</keyword>
<keyword id="KW-0813">Transport</keyword>
<protein>
    <recommendedName>
        <fullName evidence="1">NAD(P)H-quinone oxidoreductase subunit H, chloroplastic</fullName>
        <ecNumber evidence="1">7.1.1.-</ecNumber>
    </recommendedName>
    <alternativeName>
        <fullName>NAD(P)H dehydrogenase subunit H</fullName>
    </alternativeName>
    <alternativeName>
        <fullName evidence="1">NADH-plastoquinone oxidoreductase 49 kDa subunit</fullName>
    </alternativeName>
    <alternativeName>
        <fullName evidence="1">NADH-plastoquinone oxidoreductase subunit H</fullName>
    </alternativeName>
</protein>
<organism>
    <name type="scientific">Cucumis sativus</name>
    <name type="common">Cucumber</name>
    <dbReference type="NCBI Taxonomy" id="3659"/>
    <lineage>
        <taxon>Eukaryota</taxon>
        <taxon>Viridiplantae</taxon>
        <taxon>Streptophyta</taxon>
        <taxon>Embryophyta</taxon>
        <taxon>Tracheophyta</taxon>
        <taxon>Spermatophyta</taxon>
        <taxon>Magnoliopsida</taxon>
        <taxon>eudicotyledons</taxon>
        <taxon>Gunneridae</taxon>
        <taxon>Pentapetalae</taxon>
        <taxon>rosids</taxon>
        <taxon>fabids</taxon>
        <taxon>Cucurbitales</taxon>
        <taxon>Cucurbitaceae</taxon>
        <taxon>Benincaseae</taxon>
        <taxon>Cucumis</taxon>
    </lineage>
</organism>
<name>NDHH_CUCSA</name>
<proteinExistence type="inferred from homology"/>
<comment type="function">
    <text evidence="1">NDH shuttles electrons from NAD(P)H:plastoquinone, via FMN and iron-sulfur (Fe-S) centers, to quinones in the photosynthetic chain and possibly in a chloroplast respiratory chain. The immediate electron acceptor for the enzyme in this species is believed to be plastoquinone. Couples the redox reaction to proton translocation, and thus conserves the redox energy in a proton gradient.</text>
</comment>
<comment type="catalytic activity">
    <reaction evidence="1">
        <text>a plastoquinone + NADH + (n+1) H(+)(in) = a plastoquinol + NAD(+) + n H(+)(out)</text>
        <dbReference type="Rhea" id="RHEA:42608"/>
        <dbReference type="Rhea" id="RHEA-COMP:9561"/>
        <dbReference type="Rhea" id="RHEA-COMP:9562"/>
        <dbReference type="ChEBI" id="CHEBI:15378"/>
        <dbReference type="ChEBI" id="CHEBI:17757"/>
        <dbReference type="ChEBI" id="CHEBI:57540"/>
        <dbReference type="ChEBI" id="CHEBI:57945"/>
        <dbReference type="ChEBI" id="CHEBI:62192"/>
    </reaction>
</comment>
<comment type="catalytic activity">
    <reaction evidence="1">
        <text>a plastoquinone + NADPH + (n+1) H(+)(in) = a plastoquinol + NADP(+) + n H(+)(out)</text>
        <dbReference type="Rhea" id="RHEA:42612"/>
        <dbReference type="Rhea" id="RHEA-COMP:9561"/>
        <dbReference type="Rhea" id="RHEA-COMP:9562"/>
        <dbReference type="ChEBI" id="CHEBI:15378"/>
        <dbReference type="ChEBI" id="CHEBI:17757"/>
        <dbReference type="ChEBI" id="CHEBI:57783"/>
        <dbReference type="ChEBI" id="CHEBI:58349"/>
        <dbReference type="ChEBI" id="CHEBI:62192"/>
    </reaction>
</comment>
<comment type="subunit">
    <text evidence="1">NDH is composed of at least 16 different subunits, 5 of which are encoded in the nucleus.</text>
</comment>
<comment type="subcellular location">
    <subcellularLocation>
        <location evidence="1">Plastid</location>
        <location evidence="1">Chloroplast thylakoid membrane</location>
        <topology evidence="1">Peripheral membrane protein</topology>
        <orientation evidence="1">Stromal side</orientation>
    </subcellularLocation>
</comment>
<comment type="similarity">
    <text evidence="1">Belongs to the complex I 49 kDa subunit family.</text>
</comment>
<geneLocation type="chloroplast"/>
<reference key="1">
    <citation type="journal article" date="2006" name="Plant Cell Rep.">
        <title>Complete sequence and organization of the cucumber (Cucumis sativus L. cv. Baekmibaekdadagi) chloroplast genome.</title>
        <authorList>
            <person name="Kim J.-S."/>
            <person name="Jung J.D."/>
            <person name="Lee J.-A."/>
            <person name="Park H.-W."/>
            <person name="Oh K.-H."/>
            <person name="Jeong W.J."/>
            <person name="Choi D.-W."/>
            <person name="Liu J.R."/>
            <person name="Cho K.Y."/>
        </authorList>
    </citation>
    <scope>NUCLEOTIDE SEQUENCE [LARGE SCALE GENOMIC DNA]</scope>
    <source>
        <strain>cv. Baekmibaekdadagi</strain>
    </source>
</reference>
<reference key="2">
    <citation type="journal article" date="2007" name="Cell. Mol. Biol. Lett.">
        <title>The complete structure of the cucumber (Cucumis sativus L.) chloroplast genome: its composition and comparative analysis.</title>
        <authorList>
            <person name="Plader W.W."/>
            <person name="Yukawa Y."/>
            <person name="Sugiura M."/>
            <person name="Malepszy S."/>
        </authorList>
    </citation>
    <scope>NUCLEOTIDE SEQUENCE [LARGE SCALE GENOMIC DNA]</scope>
    <source>
        <strain>cv. Gy14</strain>
    </source>
</reference>
<reference key="3">
    <citation type="journal article" date="2007" name="Genome">
        <title>Sequencing cucumber (Cucumis sativus L.) chloroplast genomes identifies differences between chilling-tolerant and -susceptible cucumber lines.</title>
        <authorList>
            <person name="Chung S.-M."/>
            <person name="Gordon V.S."/>
            <person name="Staub J.E."/>
        </authorList>
    </citation>
    <scope>NUCLEOTIDE SEQUENCE [LARGE SCALE GENOMIC DNA]</scope>
    <source>
        <strain>cv. Chipper</strain>
        <strain>cv. Gy14</strain>
    </source>
</reference>